<organism>
    <name type="scientific">Vibrio cholerae serotype O1 (strain ATCC 39315 / El Tor Inaba N16961)</name>
    <dbReference type="NCBI Taxonomy" id="243277"/>
    <lineage>
        <taxon>Bacteria</taxon>
        <taxon>Pseudomonadati</taxon>
        <taxon>Pseudomonadota</taxon>
        <taxon>Gammaproteobacteria</taxon>
        <taxon>Vibrionales</taxon>
        <taxon>Vibrionaceae</taxon>
        <taxon>Vibrio</taxon>
    </lineage>
</organism>
<reference key="1">
    <citation type="journal article" date="2000" name="Nature">
        <title>DNA sequence of both chromosomes of the cholera pathogen Vibrio cholerae.</title>
        <authorList>
            <person name="Heidelberg J.F."/>
            <person name="Eisen J.A."/>
            <person name="Nelson W.C."/>
            <person name="Clayton R.A."/>
            <person name="Gwinn M.L."/>
            <person name="Dodson R.J."/>
            <person name="Haft D.H."/>
            <person name="Hickey E.K."/>
            <person name="Peterson J.D."/>
            <person name="Umayam L.A."/>
            <person name="Gill S.R."/>
            <person name="Nelson K.E."/>
            <person name="Read T.D."/>
            <person name="Tettelin H."/>
            <person name="Richardson D.L."/>
            <person name="Ermolaeva M.D."/>
            <person name="Vamathevan J.J."/>
            <person name="Bass S."/>
            <person name="Qin H."/>
            <person name="Dragoi I."/>
            <person name="Sellers P."/>
            <person name="McDonald L.A."/>
            <person name="Utterback T.R."/>
            <person name="Fleischmann R.D."/>
            <person name="Nierman W.C."/>
            <person name="White O."/>
            <person name="Salzberg S.L."/>
            <person name="Smith H.O."/>
            <person name="Colwell R.R."/>
            <person name="Mekalanos J.J."/>
            <person name="Venter J.C."/>
            <person name="Fraser C.M."/>
        </authorList>
    </citation>
    <scope>NUCLEOTIDE SEQUENCE [LARGE SCALE GENOMIC DNA]</scope>
    <source>
        <strain>ATCC 39315 / El Tor Inaba N16961</strain>
    </source>
</reference>
<evidence type="ECO:0000255" key="1">
    <source>
        <dbReference type="HAMAP-Rule" id="MF_00537"/>
    </source>
</evidence>
<evidence type="ECO:0000305" key="2"/>
<proteinExistence type="inferred from homology"/>
<accession>Q9KNZ7</accession>
<dbReference type="EMBL" id="AE003852">
    <property type="protein sequence ID" value="AAF95724.1"/>
    <property type="molecule type" value="Genomic_DNA"/>
</dbReference>
<dbReference type="PIR" id="A82058">
    <property type="entry name" value="A82058"/>
</dbReference>
<dbReference type="RefSeq" id="NP_232211.1">
    <property type="nucleotide sequence ID" value="NC_002505.1"/>
</dbReference>
<dbReference type="RefSeq" id="WP_001118926.1">
    <property type="nucleotide sequence ID" value="NZ_LT906614.1"/>
</dbReference>
<dbReference type="SMR" id="Q9KNZ7"/>
<dbReference type="STRING" id="243277.VC_2583"/>
<dbReference type="DNASU" id="2615600"/>
<dbReference type="EnsemblBacteria" id="AAF95724">
    <property type="protein sequence ID" value="AAF95724"/>
    <property type="gene ID" value="VC_2583"/>
</dbReference>
<dbReference type="GeneID" id="94012765"/>
<dbReference type="KEGG" id="vch:VC_2583"/>
<dbReference type="PATRIC" id="fig|243277.26.peg.2462"/>
<dbReference type="eggNOG" id="COG0199">
    <property type="taxonomic scope" value="Bacteria"/>
</dbReference>
<dbReference type="HOGENOM" id="CLU_139869_0_1_6"/>
<dbReference type="Proteomes" id="UP000000584">
    <property type="component" value="Chromosome 1"/>
</dbReference>
<dbReference type="GO" id="GO:0005737">
    <property type="term" value="C:cytoplasm"/>
    <property type="evidence" value="ECO:0007669"/>
    <property type="project" value="UniProtKB-ARBA"/>
</dbReference>
<dbReference type="GO" id="GO:0015935">
    <property type="term" value="C:small ribosomal subunit"/>
    <property type="evidence" value="ECO:0000318"/>
    <property type="project" value="GO_Central"/>
</dbReference>
<dbReference type="GO" id="GO:0019843">
    <property type="term" value="F:rRNA binding"/>
    <property type="evidence" value="ECO:0007669"/>
    <property type="project" value="UniProtKB-UniRule"/>
</dbReference>
<dbReference type="GO" id="GO:0003735">
    <property type="term" value="F:structural constituent of ribosome"/>
    <property type="evidence" value="ECO:0000318"/>
    <property type="project" value="GO_Central"/>
</dbReference>
<dbReference type="GO" id="GO:0006412">
    <property type="term" value="P:translation"/>
    <property type="evidence" value="ECO:0000318"/>
    <property type="project" value="GO_Central"/>
</dbReference>
<dbReference type="FunFam" id="1.10.287.1480:FF:000001">
    <property type="entry name" value="30S ribosomal protein S14"/>
    <property type="match status" value="1"/>
</dbReference>
<dbReference type="Gene3D" id="1.10.287.1480">
    <property type="match status" value="1"/>
</dbReference>
<dbReference type="HAMAP" id="MF_00537">
    <property type="entry name" value="Ribosomal_uS14_1"/>
    <property type="match status" value="1"/>
</dbReference>
<dbReference type="InterPro" id="IPR001209">
    <property type="entry name" value="Ribosomal_uS14"/>
</dbReference>
<dbReference type="InterPro" id="IPR023036">
    <property type="entry name" value="Ribosomal_uS14_bac/plastid"/>
</dbReference>
<dbReference type="InterPro" id="IPR018271">
    <property type="entry name" value="Ribosomal_uS14_CS"/>
</dbReference>
<dbReference type="NCBIfam" id="NF006477">
    <property type="entry name" value="PRK08881.1"/>
    <property type="match status" value="1"/>
</dbReference>
<dbReference type="PANTHER" id="PTHR19836">
    <property type="entry name" value="30S RIBOSOMAL PROTEIN S14"/>
    <property type="match status" value="1"/>
</dbReference>
<dbReference type="PANTHER" id="PTHR19836:SF19">
    <property type="entry name" value="SMALL RIBOSOMAL SUBUNIT PROTEIN US14M"/>
    <property type="match status" value="1"/>
</dbReference>
<dbReference type="Pfam" id="PF00253">
    <property type="entry name" value="Ribosomal_S14"/>
    <property type="match status" value="1"/>
</dbReference>
<dbReference type="SUPFAM" id="SSF57716">
    <property type="entry name" value="Glucocorticoid receptor-like (DNA-binding domain)"/>
    <property type="match status" value="1"/>
</dbReference>
<dbReference type="PROSITE" id="PS00527">
    <property type="entry name" value="RIBOSOMAL_S14"/>
    <property type="match status" value="1"/>
</dbReference>
<sequence length="101" mass="11610">MAKQSMKAREEKRAKLVAQFAEKRATLKAIISDVNASEEDRWNAVLKLQSLPRDSSRSRQRNRCNQTGRPHGFLRKFGLSRIKVREACMKGEIPGLRKASW</sequence>
<name>RS14_VIBCH</name>
<protein>
    <recommendedName>
        <fullName evidence="1">Small ribosomal subunit protein uS14</fullName>
    </recommendedName>
    <alternativeName>
        <fullName evidence="2">30S ribosomal protein S14</fullName>
    </alternativeName>
</protein>
<keyword id="KW-1185">Reference proteome</keyword>
<keyword id="KW-0687">Ribonucleoprotein</keyword>
<keyword id="KW-0689">Ribosomal protein</keyword>
<keyword id="KW-0694">RNA-binding</keyword>
<keyword id="KW-0699">rRNA-binding</keyword>
<gene>
    <name evidence="1" type="primary">rpsN</name>
    <name type="ordered locus">VC_2583</name>
</gene>
<comment type="function">
    <text evidence="1">Binds 16S rRNA, required for the assembly of 30S particles and may also be responsible for determining the conformation of the 16S rRNA at the A site.</text>
</comment>
<comment type="subunit">
    <text evidence="1">Part of the 30S ribosomal subunit. Contacts proteins S3 and S10.</text>
</comment>
<comment type="similarity">
    <text evidence="1">Belongs to the universal ribosomal protein uS14 family.</text>
</comment>
<feature type="chain" id="PRO_0000130959" description="Small ribosomal subunit protein uS14">
    <location>
        <begin position="1"/>
        <end position="101"/>
    </location>
</feature>